<proteinExistence type="inferred from homology"/>
<gene>
    <name type="primary">polA</name>
    <name type="synonym">pol</name>
</gene>
<protein>
    <recommendedName>
        <fullName>DNA polymerase I, thermostable</fullName>
        <ecNumber evidence="2">2.7.7.7</ecNumber>
    </recommendedName>
    <alternativeName>
        <fullName>Tfl polymerase 1</fullName>
    </alternativeName>
</protein>
<accession>P30313</accession>
<comment type="function">
    <text evidence="2">In addition to polymerase activity, this DNA polymerase exhibits 5'-3' exonuclease activity.</text>
</comment>
<comment type="catalytic activity">
    <reaction evidence="2">
        <text>DNA(n) + a 2'-deoxyribonucleoside 5'-triphosphate = DNA(n+1) + diphosphate</text>
        <dbReference type="Rhea" id="RHEA:22508"/>
        <dbReference type="Rhea" id="RHEA-COMP:17339"/>
        <dbReference type="Rhea" id="RHEA-COMP:17340"/>
        <dbReference type="ChEBI" id="CHEBI:33019"/>
        <dbReference type="ChEBI" id="CHEBI:61560"/>
        <dbReference type="ChEBI" id="CHEBI:173112"/>
        <dbReference type="EC" id="2.7.7.7"/>
    </reaction>
</comment>
<comment type="similarity">
    <text evidence="4">Belongs to the DNA polymerase type-A family.</text>
</comment>
<sequence length="831" mass="93784">MAMLPLFEPKGRVLLVDGHHLAYRTFFALKGLTTSRGEPVQAVYGFAKSLLKALKEDGDVVVVVFDAKAPSFRHEAYEAYKAGRAPTPEDFPRQLALIKELVDLLGLVRLEVPGFEADDVLATLAKRAEKEGYEVRILTADRDLYQLLSERIAILHPEGYLITPAWLYEKYGLRPEQWVDYRALAGDPSDNIPGVKGIGEKTAQRLIREWGSLENLFQHLDQVKPSLREKLQAGMEALALSRKLSQVHTDLPLEVDFGRRRTPNLEGLRAFLERLEFGSLLHEFGLLEGPKAAEEAPWPPPEGAFLGFSFSRPEPMWAELLALAGAWEGRLHRAQDPLRGLRDLKGVRGILAKDLAVLALREGLDLFPEDDPMLLAYLLDPSNTTPEGVARRYGGEWTEDAGERALLAERLFQTLKERLKGEERLLWLYEEVEKPLSRVLARMEATGVRLDVAYLQALSLEVEAEVRQLEEEVFRLAGHPFNLNSRDQLERVLFDELGLPAIGKTEKTGKRSTSAAVLEALREAHPIVDRILQYRELTKLKNTYIDPLPALVHPKTGRLHTRFNQTATATGRLSSSDPNLQNIPVRTPLGQRIRRAFVAEEGWVLVVLDYSQIELRVLAHLSGDENLIRVFQEGRDIHTQTASWMFGVSPEGVDPLMRRAAKTINFGVLYGMSAHRLSGELSIPYEEAVAFIERYFQSYPKVRAWIEGTLEEGRRRGYVETLFGRRRYVPDLNARVKSVREAAERMAFNMPVQGTAADLMKLAMVRLFPRLQELGARMLLQVHDELVLEAPKDRAERVAALAKEVMEGVWPLQVPLEVEVGLGEDWLSAKE</sequence>
<name>DPO1F_THETH</name>
<dbReference type="EC" id="2.7.7.7" evidence="2"/>
<dbReference type="EMBL" id="X66105">
    <property type="protein sequence ID" value="CAA46900.1"/>
    <property type="molecule type" value="Genomic_DNA"/>
</dbReference>
<dbReference type="SMR" id="P30313"/>
<dbReference type="ChEMBL" id="CHEMBL3347254"/>
<dbReference type="GO" id="GO:0008409">
    <property type="term" value="F:5'-3' exonuclease activity"/>
    <property type="evidence" value="ECO:0007669"/>
    <property type="project" value="InterPro"/>
</dbReference>
<dbReference type="GO" id="GO:0003677">
    <property type="term" value="F:DNA binding"/>
    <property type="evidence" value="ECO:0007669"/>
    <property type="project" value="UniProtKB-KW"/>
</dbReference>
<dbReference type="GO" id="GO:0003887">
    <property type="term" value="F:DNA-directed DNA polymerase activity"/>
    <property type="evidence" value="ECO:0007669"/>
    <property type="project" value="UniProtKB-KW"/>
</dbReference>
<dbReference type="GO" id="GO:0001882">
    <property type="term" value="F:nucleoside binding"/>
    <property type="evidence" value="ECO:0007669"/>
    <property type="project" value="InterPro"/>
</dbReference>
<dbReference type="GO" id="GO:0006261">
    <property type="term" value="P:DNA-templated DNA replication"/>
    <property type="evidence" value="ECO:0007669"/>
    <property type="project" value="InterPro"/>
</dbReference>
<dbReference type="GO" id="GO:0006302">
    <property type="term" value="P:double-strand break repair"/>
    <property type="evidence" value="ECO:0007669"/>
    <property type="project" value="TreeGrafter"/>
</dbReference>
<dbReference type="CDD" id="cd08637">
    <property type="entry name" value="DNA_pol_A_pol_I_C"/>
    <property type="match status" value="1"/>
</dbReference>
<dbReference type="CDD" id="cd09898">
    <property type="entry name" value="H3TH_53EXO"/>
    <property type="match status" value="1"/>
</dbReference>
<dbReference type="CDD" id="cd09859">
    <property type="entry name" value="PIN_53EXO"/>
    <property type="match status" value="1"/>
</dbReference>
<dbReference type="FunFam" id="1.10.150.20:FF:000002">
    <property type="entry name" value="DNA polymerase I"/>
    <property type="match status" value="1"/>
</dbReference>
<dbReference type="FunFam" id="1.10.150.20:FF:000003">
    <property type="entry name" value="DNA polymerase I"/>
    <property type="match status" value="1"/>
</dbReference>
<dbReference type="FunFam" id="1.20.1060.10:FF:000001">
    <property type="entry name" value="DNA polymerase I"/>
    <property type="match status" value="1"/>
</dbReference>
<dbReference type="Gene3D" id="3.30.70.370">
    <property type="match status" value="1"/>
</dbReference>
<dbReference type="Gene3D" id="1.10.150.20">
    <property type="entry name" value="5' to 3' exonuclease, C-terminal subdomain"/>
    <property type="match status" value="2"/>
</dbReference>
<dbReference type="Gene3D" id="3.40.50.1010">
    <property type="entry name" value="5'-nuclease"/>
    <property type="match status" value="1"/>
</dbReference>
<dbReference type="Gene3D" id="3.30.420.10">
    <property type="entry name" value="Ribonuclease H-like superfamily/Ribonuclease H"/>
    <property type="match status" value="1"/>
</dbReference>
<dbReference type="Gene3D" id="1.20.1060.10">
    <property type="entry name" value="Taq DNA Polymerase, Chain T, domain 4"/>
    <property type="match status" value="1"/>
</dbReference>
<dbReference type="InterPro" id="IPR020046">
    <property type="entry name" value="5-3_exonucl_a-hlix_arch_N"/>
</dbReference>
<dbReference type="InterPro" id="IPR002421">
    <property type="entry name" value="5-3_exonuclease"/>
</dbReference>
<dbReference type="InterPro" id="IPR036279">
    <property type="entry name" value="5-3_exonuclease_C_sf"/>
</dbReference>
<dbReference type="InterPro" id="IPR019760">
    <property type="entry name" value="DNA-dir_DNA_pol_A_CS"/>
</dbReference>
<dbReference type="InterPro" id="IPR001098">
    <property type="entry name" value="DNA-dir_DNA_pol_A_palm_dom"/>
</dbReference>
<dbReference type="InterPro" id="IPR043502">
    <property type="entry name" value="DNA/RNA_pol_sf"/>
</dbReference>
<dbReference type="InterPro" id="IPR020045">
    <property type="entry name" value="DNA_polI_H3TH"/>
</dbReference>
<dbReference type="InterPro" id="IPR018320">
    <property type="entry name" value="DNA_polymerase_1"/>
</dbReference>
<dbReference type="InterPro" id="IPR002298">
    <property type="entry name" value="DNA_polymerase_A"/>
</dbReference>
<dbReference type="InterPro" id="IPR008918">
    <property type="entry name" value="HhH2"/>
</dbReference>
<dbReference type="InterPro" id="IPR029060">
    <property type="entry name" value="PIN-like_dom_sf"/>
</dbReference>
<dbReference type="InterPro" id="IPR012337">
    <property type="entry name" value="RNaseH-like_sf"/>
</dbReference>
<dbReference type="InterPro" id="IPR036397">
    <property type="entry name" value="RNaseH_sf"/>
</dbReference>
<dbReference type="InterPro" id="IPR015361">
    <property type="entry name" value="Taq_pol_thermo_exonuc"/>
</dbReference>
<dbReference type="NCBIfam" id="TIGR00593">
    <property type="entry name" value="pola"/>
    <property type="match status" value="1"/>
</dbReference>
<dbReference type="PANTHER" id="PTHR10133">
    <property type="entry name" value="DNA POLYMERASE I"/>
    <property type="match status" value="1"/>
</dbReference>
<dbReference type="PANTHER" id="PTHR10133:SF27">
    <property type="entry name" value="DNA POLYMERASE NU"/>
    <property type="match status" value="1"/>
</dbReference>
<dbReference type="Pfam" id="PF01367">
    <property type="entry name" value="5_3_exonuc"/>
    <property type="match status" value="1"/>
</dbReference>
<dbReference type="Pfam" id="PF02739">
    <property type="entry name" value="5_3_exonuc_N"/>
    <property type="match status" value="1"/>
</dbReference>
<dbReference type="Pfam" id="PF00476">
    <property type="entry name" value="DNA_pol_A"/>
    <property type="match status" value="1"/>
</dbReference>
<dbReference type="Pfam" id="PF09281">
    <property type="entry name" value="Taq-exonuc"/>
    <property type="match status" value="1"/>
</dbReference>
<dbReference type="PRINTS" id="PR00868">
    <property type="entry name" value="DNAPOLI"/>
</dbReference>
<dbReference type="SMART" id="SM00475">
    <property type="entry name" value="53EXOc"/>
    <property type="match status" value="1"/>
</dbReference>
<dbReference type="SMART" id="SM00279">
    <property type="entry name" value="HhH2"/>
    <property type="match status" value="1"/>
</dbReference>
<dbReference type="SMART" id="SM00482">
    <property type="entry name" value="POLAc"/>
    <property type="match status" value="1"/>
</dbReference>
<dbReference type="SUPFAM" id="SSF47807">
    <property type="entry name" value="5' to 3' exonuclease, C-terminal subdomain"/>
    <property type="match status" value="1"/>
</dbReference>
<dbReference type="SUPFAM" id="SSF56672">
    <property type="entry name" value="DNA/RNA polymerases"/>
    <property type="match status" value="1"/>
</dbReference>
<dbReference type="SUPFAM" id="SSF88723">
    <property type="entry name" value="PIN domain-like"/>
    <property type="match status" value="1"/>
</dbReference>
<dbReference type="SUPFAM" id="SSF53098">
    <property type="entry name" value="Ribonuclease H-like"/>
    <property type="match status" value="1"/>
</dbReference>
<dbReference type="PROSITE" id="PS00447">
    <property type="entry name" value="DNA_POLYMERASE_A"/>
    <property type="match status" value="1"/>
</dbReference>
<keyword id="KW-0227">DNA damage</keyword>
<keyword id="KW-0234">DNA repair</keyword>
<keyword id="KW-0235">DNA replication</keyword>
<keyword id="KW-0238">DNA-binding</keyword>
<keyword id="KW-0239">DNA-directed DNA polymerase</keyword>
<keyword id="KW-0269">Exonuclease</keyword>
<keyword id="KW-0378">Hydrolase</keyword>
<keyword id="KW-0540">Nuclease</keyword>
<keyword id="KW-0548">Nucleotidyltransferase</keyword>
<keyword id="KW-0808">Transferase</keyword>
<organism>
    <name type="scientific">Thermus thermophilus</name>
    <dbReference type="NCBI Taxonomy" id="274"/>
    <lineage>
        <taxon>Bacteria</taxon>
        <taxon>Thermotogati</taxon>
        <taxon>Deinococcota</taxon>
        <taxon>Deinococci</taxon>
        <taxon>Thermales</taxon>
        <taxon>Thermaceae</taxon>
        <taxon>Thermus</taxon>
    </lineage>
</organism>
<reference key="1">
    <citation type="journal article" date="1992" name="Nucleic Acids Res.">
        <title>Molecular cloning and nucleotide sequence of the DNA polymerase gene from Thermus flavus.</title>
        <authorList>
            <person name="Akhmetzjanov A.A."/>
            <person name="Vakhitov V.A."/>
        </authorList>
    </citation>
    <scope>NUCLEOTIDE SEQUENCE [GENOMIC DNA]</scope>
    <source>
        <strain>ACM B-1257</strain>
    </source>
</reference>
<evidence type="ECO:0000250" key="1"/>
<evidence type="ECO:0000250" key="2">
    <source>
        <dbReference type="UniProtKB" id="P52026"/>
    </source>
</evidence>
<evidence type="ECO:0000255" key="3"/>
<evidence type="ECO:0000305" key="4"/>
<feature type="chain" id="PRO_0000101259" description="DNA polymerase I, thermostable">
    <location>
        <begin position="1"/>
        <end position="831"/>
    </location>
</feature>
<feature type="domain" description="5'-3' exonuclease" evidence="3">
    <location>
        <begin position="174"/>
        <end position="258"/>
    </location>
</feature>
<feature type="region of interest" description="Polymerase" evidence="1">
    <location>
        <begin position="409"/>
        <end position="831"/>
    </location>
</feature>